<dbReference type="EMBL" id="AF095786">
    <property type="protein sequence ID" value="AAC64407.1"/>
    <property type="molecule type" value="mRNA"/>
</dbReference>
<dbReference type="SMR" id="O97961"/>
<dbReference type="STRING" id="9627.ENSVVUP00000041588"/>
<dbReference type="GlyCosmos" id="O97961">
    <property type="glycosylation" value="7 sites, No reported glycans"/>
</dbReference>
<dbReference type="Proteomes" id="UP000286640">
    <property type="component" value="Unplaced"/>
</dbReference>
<dbReference type="GO" id="GO:0005789">
    <property type="term" value="C:endoplasmic reticulum membrane"/>
    <property type="evidence" value="ECO:0007669"/>
    <property type="project" value="UniProtKB-SubCell"/>
</dbReference>
<dbReference type="GO" id="GO:0019894">
    <property type="term" value="F:kinesin binding"/>
    <property type="evidence" value="ECO:0007669"/>
    <property type="project" value="InterPro"/>
</dbReference>
<dbReference type="GO" id="GO:0007018">
    <property type="term" value="P:microtubule-based movement"/>
    <property type="evidence" value="ECO:0007669"/>
    <property type="project" value="InterPro"/>
</dbReference>
<dbReference type="GO" id="GO:0015031">
    <property type="term" value="P:protein transport"/>
    <property type="evidence" value="ECO:0007669"/>
    <property type="project" value="InterPro"/>
</dbReference>
<dbReference type="InterPro" id="IPR024854">
    <property type="entry name" value="Kinectin"/>
</dbReference>
<dbReference type="InterPro" id="IPR007794">
    <property type="entry name" value="Rib_rcpt_KP"/>
</dbReference>
<dbReference type="PANTHER" id="PTHR18864">
    <property type="entry name" value="KINECTIN"/>
    <property type="match status" value="1"/>
</dbReference>
<dbReference type="PANTHER" id="PTHR18864:SF1">
    <property type="entry name" value="KINECTIN"/>
    <property type="match status" value="1"/>
</dbReference>
<dbReference type="Pfam" id="PF05104">
    <property type="entry name" value="Rib_recp_KP_reg"/>
    <property type="match status" value="1"/>
</dbReference>
<evidence type="ECO:0000250" key="1"/>
<evidence type="ECO:0000250" key="2">
    <source>
        <dbReference type="UniProtKB" id="Q86UP2"/>
    </source>
</evidence>
<evidence type="ECO:0000255" key="3"/>
<evidence type="ECO:0000256" key="4">
    <source>
        <dbReference type="SAM" id="MobiDB-lite"/>
    </source>
</evidence>
<evidence type="ECO:0000303" key="5">
    <source>
    </source>
</evidence>
<evidence type="ECO:0000305" key="6"/>
<reference key="1">
    <citation type="journal article" date="2002" name="Mol. Reprod. Dev.">
        <title>Molecular cloning and characterization of fox testis kinectin.</title>
        <authorList>
            <person name="Xu J."/>
            <person name="Bird P.H."/>
            <person name="Bradley M.P."/>
            <person name="Janssens P.A."/>
            <person name="Hardy C.M."/>
        </authorList>
    </citation>
    <scope>NUCLEOTIDE SEQUENCE [MRNA] (ISOFORMS 1; 2 AND 3)</scope>
    <source>
        <tissue>Testis</tissue>
    </source>
</reference>
<name>KTN1_VULVU</name>
<gene>
    <name type="primary">KTN1</name>
</gene>
<accession>O97961</accession>
<sequence>MEFYESTYFIVLIPSVVITVIFLFFWLFMKETLYDEVLAKQKREQKLIPTKTDKKKAEKKKNKKKEIQNGNLHESDSESVPRDFKLSDALAVEDEQVVPIPLNVVETSSSVRERKKKEKKHKPVLEEQVTKESDVSKIPGKKVEPVPVTKQPTPPSEAAASKKKPGQKKSKNGSDDQDKKVETLMAPSKKQESLPLQQETKQESGSGKKKVSSKKQKAENVLVDEPLIHATTYIPLMDNADSNPVLDKREVIDLIKPDQVEGIQKTGAKKLKTETDKENAEVKFKDFLLSLKTMMFSEDEALCVVDLLKEKSGVIQDALKRSSKGELTALVHQLQEKDKLLAAVKEDAAVMKDRCKQLTQEMMSEKERSNVVIARMKDRIGTLEKEHNVFQNKMHVSYQETQQMQMKFQQVREQMEAEIAHLKQENGILRDAVSNTTNQLESKQSAELNKLRQDYARLVNELTEKTGKLQQEEVQKKNAEQAVTQLKVQLQEAERRWEEVQSYIRKRTAEHEAAQQDLQSKFVAKENEVQSLHSKLTDTLVSKQQLEQRLMQLMESEQKRVTKEESLQMQVQDILEQNEALKALIQQFHSQIAAQTSASVLAEELHKVIAEKDKQIKQTEDSLANEHDHLTSKEEELKDIQNMNFLLKAEVQKLQALANEQAAAAHELEKMQKSIHVKDDQIRLLEEQLQCEISNKMEEFKILNDQNKALQLEVQKLQILVSEQPNKDVVEQMEKCIQEKDEKLKTVEELLETGLIQVATKEEELNAIRTENSSLTKEVQDLKAKQNDQVSFASLVEELKKVIHEKDGKIKSVEELLEAEVLKVANKEKTIQDLKQEIEALKEEIGNIQLEKAQQLSITSQIQELQNLLKGKEEQMNTMKTVLEEKEKDLASRGKWLQDLQEENESLKTHIQEVAQHNLKEACSASRLEELETVLKEKENEMKRIETILKERENDLSSKIKLLQEVQDENKLFKSEIEQLKQCNYQQASSFPPHEELLKVISEREKEITGLQNELDSLKEAVEHQRKKNNDLREKNWEAMEALASTEKMLQDKVNKTSKVERQQYVEAIELEAKEVLKKLFPKVSVPPNLNYGEWLRGFEKKPKECVAETSGSEEVKVLEHKLKEADEMHTLLQLECEKYKSVLAETEGILQKLQRSVEQEENKWKVKVDESQKTIKQMQLSFTSSEQELERLRRENKDIENLRREREHLEMELEKAEIERSTYVTEVRELKTQLNETLTKLRTEQSERQKVAGDLHKAQQSLDLIQSKIVKAAGDTTVIENSDVSPEAESSEKETMSVSLNQTVTQLQQLLQAVNQQLTKEKEHYQVLE</sequence>
<protein>
    <recommendedName>
        <fullName>Kinectin</fullName>
    </recommendedName>
</protein>
<comment type="function">
    <text evidence="1">Receptor for kinesin thus involved in kinesin-driven vesicle motility.</text>
</comment>
<comment type="subunit">
    <text evidence="1">Parallel homodimers formed between the membrane-bound and the cytosolic form, and also between 2 cytosolic forms.</text>
</comment>
<comment type="subcellular location">
    <subcellularLocation>
        <location>Endoplasmic reticulum membrane</location>
        <topology>Single-pass type II membrane protein</topology>
    </subcellularLocation>
    <text>Vesicle membrane protein anchored to the endoplasmic reticulum. In testis, localized at sperm surface.</text>
</comment>
<comment type="alternative products">
    <event type="alternative splicing"/>
    <isoform>
        <id>O97961-1</id>
        <name>1</name>
        <sequence type="displayed"/>
    </isoform>
    <isoform>
        <id>O97961-2</id>
        <name>2</name>
        <sequence type="described" ref="VSP_007983"/>
    </isoform>
    <isoform>
        <id>O97961-3</id>
        <name>3</name>
        <sequence type="described" ref="VSP_007984"/>
    </isoform>
    <text>Additional isoforms seem to exist.</text>
</comment>
<comment type="tissue specificity">
    <text>Expressed in male brain, heart, kidney, liver, lung, spleen and testis.</text>
</comment>
<comment type="similarity">
    <text evidence="6">Belongs to the kinectin family.</text>
</comment>
<feature type="chain" id="PRO_0000084338" description="Kinectin">
    <location>
        <begin position="1"/>
        <end position="1330"/>
    </location>
</feature>
<feature type="topological domain" description="Cytoplasmic" evidence="3">
    <location>
        <begin position="1"/>
        <end position="6"/>
    </location>
</feature>
<feature type="transmembrane region" description="Helical; Signal-anchor for type II membrane protein" evidence="3">
    <location>
        <begin position="7"/>
        <end position="29"/>
    </location>
</feature>
<feature type="topological domain" description="Lumenal" evidence="3">
    <location>
        <begin position="30"/>
        <end position="1330"/>
    </location>
</feature>
<feature type="region of interest" description="Disordered" evidence="4">
    <location>
        <begin position="49"/>
        <end position="81"/>
    </location>
</feature>
<feature type="region of interest" description="Disordered" evidence="4">
    <location>
        <begin position="108"/>
        <end position="218"/>
    </location>
</feature>
<feature type="coiled-coil region" evidence="3">
    <location>
        <begin position="332"/>
        <end position="1329"/>
    </location>
</feature>
<feature type="compositionally biased region" description="Basic residues" evidence="4">
    <location>
        <begin position="113"/>
        <end position="122"/>
    </location>
</feature>
<feature type="compositionally biased region" description="Basic and acidic residues" evidence="4">
    <location>
        <begin position="123"/>
        <end position="135"/>
    </location>
</feature>
<feature type="compositionally biased region" description="Basic residues" evidence="4">
    <location>
        <begin position="161"/>
        <end position="171"/>
    </location>
</feature>
<feature type="compositionally biased region" description="Basic and acidic residues" evidence="4">
    <location>
        <begin position="172"/>
        <end position="182"/>
    </location>
</feature>
<feature type="modified residue" description="Phosphoserine" evidence="2">
    <location>
        <position position="75"/>
    </location>
</feature>
<feature type="modified residue" description="Phosphoserine" evidence="2">
    <location>
        <position position="77"/>
    </location>
</feature>
<feature type="modified residue" description="Phosphothreonine" evidence="2">
    <location>
        <position position="153"/>
    </location>
</feature>
<feature type="modified residue" description="Phosphoserine" evidence="2">
    <location>
        <position position="156"/>
    </location>
</feature>
<feature type="modified residue" description="Phosphoserine" evidence="2">
    <location>
        <position position="1085"/>
    </location>
</feature>
<feature type="modified residue" description="Phosphoserine" evidence="2">
    <location>
        <position position="1286"/>
    </location>
</feature>
<feature type="glycosylation site" description="N-linked (GlcNAc...) asparagine" evidence="3">
    <location>
        <position position="172"/>
    </location>
</feature>
<feature type="glycosylation site" description="N-linked (GlcNAc...) asparagine" evidence="3">
    <location>
        <position position="435"/>
    </location>
</feature>
<feature type="glycosylation site" description="N-linked (GlcNAc...) asparagine" evidence="3">
    <location>
        <position position="772"/>
    </location>
</feature>
<feature type="glycosylation site" description="N-linked (GlcNAc...) asparagine" evidence="3">
    <location>
        <position position="904"/>
    </location>
</feature>
<feature type="glycosylation site" description="N-linked (GlcNAc...) asparagine" evidence="3">
    <location>
        <position position="1055"/>
    </location>
</feature>
<feature type="glycosylation site" description="N-linked (GlcNAc...) asparagine" evidence="3">
    <location>
        <position position="1236"/>
    </location>
</feature>
<feature type="glycosylation site" description="N-linked (GlcNAc...) asparagine" evidence="3">
    <location>
        <position position="1302"/>
    </location>
</feature>
<feature type="splice variant" id="VSP_007983" description="In isoform 2." evidence="5">
    <location>
        <begin position="834"/>
        <end position="856"/>
    </location>
</feature>
<feature type="splice variant" id="VSP_007984" description="In isoform 3." evidence="5">
    <location>
        <begin position="1031"/>
        <end position="1060"/>
    </location>
</feature>
<keyword id="KW-0025">Alternative splicing</keyword>
<keyword id="KW-0175">Coiled coil</keyword>
<keyword id="KW-0256">Endoplasmic reticulum</keyword>
<keyword id="KW-0325">Glycoprotein</keyword>
<keyword id="KW-0472">Membrane</keyword>
<keyword id="KW-0597">Phosphoprotein</keyword>
<keyword id="KW-1185">Reference proteome</keyword>
<keyword id="KW-0735">Signal-anchor</keyword>
<keyword id="KW-0812">Transmembrane</keyword>
<keyword id="KW-1133">Transmembrane helix</keyword>
<proteinExistence type="evidence at transcript level"/>
<organism>
    <name type="scientific">Vulpes vulpes</name>
    <name type="common">Red fox</name>
    <dbReference type="NCBI Taxonomy" id="9627"/>
    <lineage>
        <taxon>Eukaryota</taxon>
        <taxon>Metazoa</taxon>
        <taxon>Chordata</taxon>
        <taxon>Craniata</taxon>
        <taxon>Vertebrata</taxon>
        <taxon>Euteleostomi</taxon>
        <taxon>Mammalia</taxon>
        <taxon>Eutheria</taxon>
        <taxon>Laurasiatheria</taxon>
        <taxon>Carnivora</taxon>
        <taxon>Caniformia</taxon>
        <taxon>Canidae</taxon>
        <taxon>Vulpes</taxon>
    </lineage>
</organism>